<sequence length="161" mass="18643">MAEKMLVMTSNDGKNIEVPRDVAERSLLIKNMLEDLGDPTEPIPIPNVSENVLSKVLEWCAHHRNDPPSSADDDDSRRKTTDIEEWDQKFMQVDQEMLFEIILAANYLDIKPLLDIGCKTVANMIKGKSPEEIRKTFNIQNDFTPEEEDQIRRENEWAEDR</sequence>
<evidence type="ECO:0000250" key="1"/>
<evidence type="ECO:0000269" key="2">
    <source>
    </source>
</evidence>
<evidence type="ECO:0000269" key="3">
    <source>
    </source>
</evidence>
<evidence type="ECO:0000305" key="4"/>
<comment type="function">
    <text evidence="1 2 3">Essential component of the SCF (SKP1-CUL1-F-box protein) E3 ubiquitin ligase complexes, which mediate the ubiquitination and subsequent proteasomal degradation of target proteins (By similarity). Controls sulfur metabolite repression, probably by mediating the inactivation or degradation of the metR transcription factor.</text>
</comment>
<comment type="pathway">
    <text>Protein modification; protein ubiquitination.</text>
</comment>
<comment type="subunit">
    <text evidence="1">Component of the SCF (SKP1-CUL1-F-box protein) E3 ubiquitin ligase complexes.</text>
</comment>
<comment type="similarity">
    <text evidence="4">Belongs to the SKP1 family.</text>
</comment>
<comment type="sequence caution" evidence="4">
    <conflict type="erroneous gene model prediction">
        <sequence resource="EMBL-CDS" id="EAA64413"/>
    </conflict>
</comment>
<keyword id="KW-1185">Reference proteome</keyword>
<keyword id="KW-0833">Ubl conjugation pathway</keyword>
<reference key="1">
    <citation type="journal article" date="1993" name="Mol. Gen. Genet.">
        <title>At least four regulatory genes control sulphur metabolite repression in Aspergillus nidulans.</title>
        <authorList>
            <person name="Natorff R."/>
            <person name="Balinska M."/>
            <person name="Paszewski A."/>
        </authorList>
    </citation>
    <scope>NUCLEOTIDE SEQUENCE [GENOMIC DNA]</scope>
    <scope>FUNCTION</scope>
</reference>
<reference key="2">
    <citation type="journal article" date="2005" name="Nature">
        <title>Sequencing of Aspergillus nidulans and comparative analysis with A. fumigatus and A. oryzae.</title>
        <authorList>
            <person name="Galagan J.E."/>
            <person name="Calvo S.E."/>
            <person name="Cuomo C."/>
            <person name="Ma L.-J."/>
            <person name="Wortman J.R."/>
            <person name="Batzoglou S."/>
            <person name="Lee S.-I."/>
            <person name="Bastuerkmen M."/>
            <person name="Spevak C.C."/>
            <person name="Clutterbuck J."/>
            <person name="Kapitonov V."/>
            <person name="Jurka J."/>
            <person name="Scazzocchio C."/>
            <person name="Farman M.L."/>
            <person name="Butler J."/>
            <person name="Purcell S."/>
            <person name="Harris S."/>
            <person name="Braus G.H."/>
            <person name="Draht O."/>
            <person name="Busch S."/>
            <person name="D'Enfert C."/>
            <person name="Bouchier C."/>
            <person name="Goldman G.H."/>
            <person name="Bell-Pedersen D."/>
            <person name="Griffiths-Jones S."/>
            <person name="Doonan J.H."/>
            <person name="Yu J."/>
            <person name="Vienken K."/>
            <person name="Pain A."/>
            <person name="Freitag M."/>
            <person name="Selker E.U."/>
            <person name="Archer D.B."/>
            <person name="Penalva M.A."/>
            <person name="Oakley B.R."/>
            <person name="Momany M."/>
            <person name="Tanaka T."/>
            <person name="Kumagai T."/>
            <person name="Asai K."/>
            <person name="Machida M."/>
            <person name="Nierman W.C."/>
            <person name="Denning D.W."/>
            <person name="Caddick M.X."/>
            <person name="Hynes M."/>
            <person name="Paoletti M."/>
            <person name="Fischer R."/>
            <person name="Miller B.L."/>
            <person name="Dyer P.S."/>
            <person name="Sachs M.S."/>
            <person name="Osmani S.A."/>
            <person name="Birren B.W."/>
        </authorList>
    </citation>
    <scope>NUCLEOTIDE SEQUENCE [LARGE SCALE GENOMIC DNA]</scope>
    <source>
        <strain>FGSC A4 / ATCC 38163 / CBS 112.46 / NRRL 194 / M139</strain>
    </source>
</reference>
<reference key="3">
    <citation type="journal article" date="2009" name="Fungal Genet. Biol.">
        <title>The 2008 update of the Aspergillus nidulans genome annotation: a community effort.</title>
        <authorList>
            <person name="Wortman J.R."/>
            <person name="Gilsenan J.M."/>
            <person name="Joardar V."/>
            <person name="Deegan J."/>
            <person name="Clutterbuck J."/>
            <person name="Andersen M.R."/>
            <person name="Archer D."/>
            <person name="Bencina M."/>
            <person name="Braus G."/>
            <person name="Coutinho P."/>
            <person name="von Dohren H."/>
            <person name="Doonan J."/>
            <person name="Driessen A.J."/>
            <person name="Durek P."/>
            <person name="Espeso E."/>
            <person name="Fekete E."/>
            <person name="Flipphi M."/>
            <person name="Estrada C.G."/>
            <person name="Geysens S."/>
            <person name="Goldman G."/>
            <person name="de Groot P.W."/>
            <person name="Hansen K."/>
            <person name="Harris S.D."/>
            <person name="Heinekamp T."/>
            <person name="Helmstaedt K."/>
            <person name="Henrissat B."/>
            <person name="Hofmann G."/>
            <person name="Homan T."/>
            <person name="Horio T."/>
            <person name="Horiuchi H."/>
            <person name="James S."/>
            <person name="Jones M."/>
            <person name="Karaffa L."/>
            <person name="Karanyi Z."/>
            <person name="Kato M."/>
            <person name="Keller N."/>
            <person name="Kelly D.E."/>
            <person name="Kiel J.A."/>
            <person name="Kim J.M."/>
            <person name="van der Klei I.J."/>
            <person name="Klis F.M."/>
            <person name="Kovalchuk A."/>
            <person name="Krasevec N."/>
            <person name="Kubicek C.P."/>
            <person name="Liu B."/>
            <person name="Maccabe A."/>
            <person name="Meyer V."/>
            <person name="Mirabito P."/>
            <person name="Miskei M."/>
            <person name="Mos M."/>
            <person name="Mullins J."/>
            <person name="Nelson D.R."/>
            <person name="Nielsen J."/>
            <person name="Oakley B.R."/>
            <person name="Osmani S.A."/>
            <person name="Pakula T."/>
            <person name="Paszewski A."/>
            <person name="Paulsen I."/>
            <person name="Pilsyk S."/>
            <person name="Pocsi I."/>
            <person name="Punt P.J."/>
            <person name="Ram A.F."/>
            <person name="Ren Q."/>
            <person name="Robellet X."/>
            <person name="Robson G."/>
            <person name="Seiboth B."/>
            <person name="van Solingen P."/>
            <person name="Specht T."/>
            <person name="Sun J."/>
            <person name="Taheri-Talesh N."/>
            <person name="Takeshita N."/>
            <person name="Ussery D."/>
            <person name="vanKuyk P.A."/>
            <person name="Visser H."/>
            <person name="van de Vondervoort P.J."/>
            <person name="de Vries R.P."/>
            <person name="Walton J."/>
            <person name="Xiang X."/>
            <person name="Xiong Y."/>
            <person name="Zeng A.P."/>
            <person name="Brandt B.W."/>
            <person name="Cornell M.J."/>
            <person name="van den Hondel C.A."/>
            <person name="Visser J."/>
            <person name="Oliver S.G."/>
            <person name="Turner G."/>
        </authorList>
    </citation>
    <scope>GENOME REANNOTATION</scope>
    <source>
        <strain>FGSC A4 / ATCC 38163 / CBS 112.46 / NRRL 194 / M139</strain>
    </source>
</reference>
<reference key="4">
    <citation type="journal article" date="2000" name="Mol. Gen. Genet.">
        <title>sconC, a gene involved in the regulation of sulphur metabolism in Aspergillus nidulans, belongs to the SKP1 gene family.</title>
        <authorList>
            <person name="Piotrowska M."/>
            <person name="Natorff R."/>
            <person name="Paszewski A."/>
        </authorList>
    </citation>
    <scope>FUNCTION</scope>
</reference>
<protein>
    <recommendedName>
        <fullName>E3 ubiquitin ligase complex SCF subunit sconC</fullName>
    </recommendedName>
    <alternativeName>
        <fullName>Sulfur controller C</fullName>
    </alternativeName>
    <alternativeName>
        <fullName>Sulfur metabolite repression control protein C</fullName>
    </alternativeName>
</protein>
<organism>
    <name type="scientific">Emericella nidulans (strain FGSC A4 / ATCC 38163 / CBS 112.46 / NRRL 194 / M139)</name>
    <name type="common">Aspergillus nidulans</name>
    <dbReference type="NCBI Taxonomy" id="227321"/>
    <lineage>
        <taxon>Eukaryota</taxon>
        <taxon>Fungi</taxon>
        <taxon>Dikarya</taxon>
        <taxon>Ascomycota</taxon>
        <taxon>Pezizomycotina</taxon>
        <taxon>Eurotiomycetes</taxon>
        <taxon>Eurotiomycetidae</taxon>
        <taxon>Eurotiales</taxon>
        <taxon>Aspergillaceae</taxon>
        <taxon>Aspergillus</taxon>
        <taxon>Aspergillus subgen. Nidulantes</taxon>
    </lineage>
</organism>
<dbReference type="EMBL" id="U75874">
    <property type="protein sequence ID" value="AAB18274.2"/>
    <property type="molecule type" value="Genomic_DNA"/>
</dbReference>
<dbReference type="EMBL" id="AACD01000038">
    <property type="protein sequence ID" value="EAA64413.1"/>
    <property type="status" value="ALT_SEQ"/>
    <property type="molecule type" value="Genomic_DNA"/>
</dbReference>
<dbReference type="EMBL" id="BN001307">
    <property type="protein sequence ID" value="CBF86566.1"/>
    <property type="molecule type" value="Genomic_DNA"/>
</dbReference>
<dbReference type="RefSeq" id="XP_659906.1">
    <property type="nucleotide sequence ID" value="XM_654814.1"/>
</dbReference>
<dbReference type="SMR" id="Q5BAX8"/>
<dbReference type="FunCoup" id="Q5BAX8">
    <property type="interactions" value="783"/>
</dbReference>
<dbReference type="STRING" id="227321.Q5BAX8"/>
<dbReference type="EnsemblFungi" id="CBF86566">
    <property type="protein sequence ID" value="CBF86566"/>
    <property type="gene ID" value="ANIA_02302"/>
</dbReference>
<dbReference type="KEGG" id="ani:ANIA_02302"/>
<dbReference type="VEuPathDB" id="FungiDB:AN2302"/>
<dbReference type="eggNOG" id="KOG1724">
    <property type="taxonomic scope" value="Eukaryota"/>
</dbReference>
<dbReference type="HOGENOM" id="CLU_059252_4_0_1"/>
<dbReference type="InParanoid" id="Q5BAX8"/>
<dbReference type="OMA" id="DKYTASM"/>
<dbReference type="OrthoDB" id="2342932at2759"/>
<dbReference type="UniPathway" id="UPA00143"/>
<dbReference type="Proteomes" id="UP000000560">
    <property type="component" value="Chromosome VII"/>
</dbReference>
<dbReference type="GO" id="GO:0031518">
    <property type="term" value="C:CBF3 complex"/>
    <property type="evidence" value="ECO:0007669"/>
    <property type="project" value="EnsemblFungi"/>
</dbReference>
<dbReference type="GO" id="GO:0005737">
    <property type="term" value="C:cytoplasm"/>
    <property type="evidence" value="ECO:0000318"/>
    <property type="project" value="GO_Central"/>
</dbReference>
<dbReference type="GO" id="GO:0000776">
    <property type="term" value="C:kinetochore"/>
    <property type="evidence" value="ECO:0007669"/>
    <property type="project" value="EnsemblFungi"/>
</dbReference>
<dbReference type="GO" id="GO:0043224">
    <property type="term" value="C:nuclear SCF ubiquitin ligase complex"/>
    <property type="evidence" value="ECO:0007669"/>
    <property type="project" value="EnsemblFungi"/>
</dbReference>
<dbReference type="GO" id="GO:0005634">
    <property type="term" value="C:nucleus"/>
    <property type="evidence" value="ECO:0000318"/>
    <property type="project" value="GO_Central"/>
</dbReference>
<dbReference type="GO" id="GO:0043291">
    <property type="term" value="C:RAVE complex"/>
    <property type="evidence" value="ECO:0007669"/>
    <property type="project" value="EnsemblFungi"/>
</dbReference>
<dbReference type="GO" id="GO:0017117">
    <property type="term" value="C:single-stranded DNA-dependent ATP-dependent DNA helicase complex"/>
    <property type="evidence" value="ECO:0007669"/>
    <property type="project" value="EnsemblFungi"/>
</dbReference>
<dbReference type="GO" id="GO:0097602">
    <property type="term" value="F:cullin family protein binding"/>
    <property type="evidence" value="ECO:0000318"/>
    <property type="project" value="GO_Central"/>
</dbReference>
<dbReference type="GO" id="GO:0003688">
    <property type="term" value="F:DNA replication origin binding"/>
    <property type="evidence" value="ECO:0007669"/>
    <property type="project" value="EnsemblFungi"/>
</dbReference>
<dbReference type="GO" id="GO:0061630">
    <property type="term" value="F:ubiquitin protein ligase activity"/>
    <property type="evidence" value="ECO:0007669"/>
    <property type="project" value="EnsemblFungi"/>
</dbReference>
<dbReference type="GO" id="GO:0010458">
    <property type="term" value="P:exit from mitosis"/>
    <property type="evidence" value="ECO:0007669"/>
    <property type="project" value="EnsemblFungi"/>
</dbReference>
<dbReference type="GO" id="GO:0000082">
    <property type="term" value="P:G1/S transition of mitotic cell cycle"/>
    <property type="evidence" value="ECO:0007669"/>
    <property type="project" value="EnsemblFungi"/>
</dbReference>
<dbReference type="GO" id="GO:0000086">
    <property type="term" value="P:G2/M transition of mitotic cell cycle"/>
    <property type="evidence" value="ECO:0007669"/>
    <property type="project" value="EnsemblFungi"/>
</dbReference>
<dbReference type="GO" id="GO:0051382">
    <property type="term" value="P:kinetochore assembly"/>
    <property type="evidence" value="ECO:0007669"/>
    <property type="project" value="EnsemblFungi"/>
</dbReference>
<dbReference type="GO" id="GO:0000278">
    <property type="term" value="P:mitotic cell cycle"/>
    <property type="evidence" value="ECO:0000318"/>
    <property type="project" value="GO_Central"/>
</dbReference>
<dbReference type="GO" id="GO:0101026">
    <property type="term" value="P:mitotic nuclear membrane biogenesis"/>
    <property type="evidence" value="ECO:0007669"/>
    <property type="project" value="EnsemblFungi"/>
</dbReference>
<dbReference type="GO" id="GO:2000766">
    <property type="term" value="P:negative regulation of cytoplasmic translation"/>
    <property type="evidence" value="ECO:0007669"/>
    <property type="project" value="EnsemblFungi"/>
</dbReference>
<dbReference type="GO" id="GO:0045841">
    <property type="term" value="P:negative regulation of mitotic metaphase/anaphase transition"/>
    <property type="evidence" value="ECO:0007669"/>
    <property type="project" value="EnsemblFungi"/>
</dbReference>
<dbReference type="GO" id="GO:0010828">
    <property type="term" value="P:positive regulation of D-glucose transmembrane transport"/>
    <property type="evidence" value="ECO:0007669"/>
    <property type="project" value="EnsemblFungi"/>
</dbReference>
<dbReference type="GO" id="GO:0045116">
    <property type="term" value="P:protein neddylation"/>
    <property type="evidence" value="ECO:0007669"/>
    <property type="project" value="EnsemblFungi"/>
</dbReference>
<dbReference type="GO" id="GO:0016567">
    <property type="term" value="P:protein ubiquitination"/>
    <property type="evidence" value="ECO:0007669"/>
    <property type="project" value="UniProtKB-UniPathway"/>
</dbReference>
<dbReference type="GO" id="GO:0000018">
    <property type="term" value="P:regulation of DNA recombination"/>
    <property type="evidence" value="ECO:0007669"/>
    <property type="project" value="EnsemblFungi"/>
</dbReference>
<dbReference type="GO" id="GO:0007096">
    <property type="term" value="P:regulation of exit from mitosis"/>
    <property type="evidence" value="ECO:0007669"/>
    <property type="project" value="EnsemblFungi"/>
</dbReference>
<dbReference type="GO" id="GO:0043254">
    <property type="term" value="P:regulation of protein-containing complex assembly"/>
    <property type="evidence" value="ECO:0007669"/>
    <property type="project" value="EnsemblFungi"/>
</dbReference>
<dbReference type="GO" id="GO:0000712">
    <property type="term" value="P:resolution of meiotic recombination intermediates"/>
    <property type="evidence" value="ECO:0007669"/>
    <property type="project" value="EnsemblFungi"/>
</dbReference>
<dbReference type="GO" id="GO:0031146">
    <property type="term" value="P:SCF-dependent proteasomal ubiquitin-dependent protein catabolic process"/>
    <property type="evidence" value="ECO:0000318"/>
    <property type="project" value="GO_Central"/>
</dbReference>
<dbReference type="GO" id="GO:0000921">
    <property type="term" value="P:septin ring assembly"/>
    <property type="evidence" value="ECO:0007669"/>
    <property type="project" value="EnsemblFungi"/>
</dbReference>
<dbReference type="GO" id="GO:0030466">
    <property type="term" value="P:silent mating-type cassette heterochromatin formation"/>
    <property type="evidence" value="ECO:0007669"/>
    <property type="project" value="EnsemblFungi"/>
</dbReference>
<dbReference type="GO" id="GO:0006790">
    <property type="term" value="P:sulfur compound metabolic process"/>
    <property type="evidence" value="ECO:0000270"/>
    <property type="project" value="AspGD"/>
</dbReference>
<dbReference type="GO" id="GO:0007035">
    <property type="term" value="P:vacuolar acidification"/>
    <property type="evidence" value="ECO:0007669"/>
    <property type="project" value="EnsemblFungi"/>
</dbReference>
<dbReference type="GO" id="GO:0070072">
    <property type="term" value="P:vacuolar proton-transporting V-type ATPase complex assembly"/>
    <property type="evidence" value="ECO:0007669"/>
    <property type="project" value="EnsemblFungi"/>
</dbReference>
<dbReference type="CDD" id="cd18322">
    <property type="entry name" value="BTB_POZ_SKP1"/>
    <property type="match status" value="1"/>
</dbReference>
<dbReference type="FunFam" id="3.30.710.10:FF:000026">
    <property type="entry name" value="E3 ubiquitin ligase complex SCF subunit"/>
    <property type="match status" value="1"/>
</dbReference>
<dbReference type="Gene3D" id="3.30.710.10">
    <property type="entry name" value="Potassium Channel Kv1.1, Chain A"/>
    <property type="match status" value="1"/>
</dbReference>
<dbReference type="InterPro" id="IPR016897">
    <property type="entry name" value="SKP1"/>
</dbReference>
<dbReference type="InterPro" id="IPR001232">
    <property type="entry name" value="SKP1-like"/>
</dbReference>
<dbReference type="InterPro" id="IPR036296">
    <property type="entry name" value="SKP1-like_dim_sf"/>
</dbReference>
<dbReference type="InterPro" id="IPR011333">
    <property type="entry name" value="SKP1/BTB/POZ_sf"/>
</dbReference>
<dbReference type="InterPro" id="IPR016072">
    <property type="entry name" value="Skp1_comp_dimer"/>
</dbReference>
<dbReference type="InterPro" id="IPR016073">
    <property type="entry name" value="Skp1_comp_POZ"/>
</dbReference>
<dbReference type="PANTHER" id="PTHR11165">
    <property type="entry name" value="SKP1"/>
    <property type="match status" value="1"/>
</dbReference>
<dbReference type="Pfam" id="PF01466">
    <property type="entry name" value="Skp1"/>
    <property type="match status" value="1"/>
</dbReference>
<dbReference type="Pfam" id="PF03931">
    <property type="entry name" value="Skp1_POZ"/>
    <property type="match status" value="1"/>
</dbReference>
<dbReference type="PIRSF" id="PIRSF028729">
    <property type="entry name" value="E3_ubiquit_lig_SCF_Skp"/>
    <property type="match status" value="1"/>
</dbReference>
<dbReference type="SMART" id="SM00512">
    <property type="entry name" value="Skp1"/>
    <property type="match status" value="1"/>
</dbReference>
<dbReference type="SUPFAM" id="SSF54695">
    <property type="entry name" value="POZ domain"/>
    <property type="match status" value="1"/>
</dbReference>
<dbReference type="SUPFAM" id="SSF81382">
    <property type="entry name" value="Skp1 dimerisation domain-like"/>
    <property type="match status" value="1"/>
</dbReference>
<gene>
    <name type="primary">sconC</name>
    <name type="synonym">skpA</name>
    <name type="ORF">AN2302</name>
</gene>
<name>SKP1_EMENI</name>
<proteinExistence type="inferred from homology"/>
<accession>Q5BAX8</accession>
<accession>C8VN50</accession>
<accession>Q92229</accession>
<feature type="chain" id="PRO_0000397266" description="E3 ubiquitin ligase complex SCF subunit sconC">
    <location>
        <begin position="1"/>
        <end position="161"/>
    </location>
</feature>
<feature type="region of interest" description="Interaction with the F-box domain of F-box proteins" evidence="1">
    <location>
        <begin position="102"/>
        <end position="161"/>
    </location>
</feature>